<name>PYRH_MYCSK</name>
<gene>
    <name evidence="1" type="primary">pyrH</name>
    <name type="ordered locus">Mkms_2049</name>
</gene>
<comment type="function">
    <text evidence="1">Catalyzes the reversible phosphorylation of UMP to UDP.</text>
</comment>
<comment type="catalytic activity">
    <reaction evidence="1">
        <text>UMP + ATP = UDP + ADP</text>
        <dbReference type="Rhea" id="RHEA:24400"/>
        <dbReference type="ChEBI" id="CHEBI:30616"/>
        <dbReference type="ChEBI" id="CHEBI:57865"/>
        <dbReference type="ChEBI" id="CHEBI:58223"/>
        <dbReference type="ChEBI" id="CHEBI:456216"/>
        <dbReference type="EC" id="2.7.4.22"/>
    </reaction>
</comment>
<comment type="activity regulation">
    <text evidence="1">Inhibited by UTP.</text>
</comment>
<comment type="pathway">
    <text evidence="1">Pyrimidine metabolism; CTP biosynthesis via de novo pathway; UDP from UMP (UMPK route): step 1/1.</text>
</comment>
<comment type="subunit">
    <text evidence="1">Homohexamer.</text>
</comment>
<comment type="subcellular location">
    <subcellularLocation>
        <location evidence="1">Cytoplasm</location>
    </subcellularLocation>
</comment>
<comment type="similarity">
    <text evidence="1">Belongs to the UMP kinase family.</text>
</comment>
<comment type="sequence caution" evidence="2">
    <conflict type="erroneous initiation">
        <sequence resource="EMBL-CDS" id="ABL91248"/>
    </conflict>
</comment>
<protein>
    <recommendedName>
        <fullName evidence="1">Uridylate kinase</fullName>
        <shortName evidence="1">UK</shortName>
        <ecNumber evidence="1">2.7.4.22</ecNumber>
    </recommendedName>
    <alternativeName>
        <fullName evidence="1">Uridine monophosphate kinase</fullName>
        <shortName evidence="1">UMP kinase</shortName>
        <shortName evidence="1">UMPK</shortName>
    </alternativeName>
</protein>
<organism>
    <name type="scientific">Mycobacterium sp. (strain KMS)</name>
    <dbReference type="NCBI Taxonomy" id="189918"/>
    <lineage>
        <taxon>Bacteria</taxon>
        <taxon>Bacillati</taxon>
        <taxon>Actinomycetota</taxon>
        <taxon>Actinomycetes</taxon>
        <taxon>Mycobacteriales</taxon>
        <taxon>Mycobacteriaceae</taxon>
        <taxon>Mycobacterium</taxon>
    </lineage>
</organism>
<proteinExistence type="inferred from homology"/>
<evidence type="ECO:0000255" key="1">
    <source>
        <dbReference type="HAMAP-Rule" id="MF_01220"/>
    </source>
</evidence>
<evidence type="ECO:0000305" key="2"/>
<reference key="1">
    <citation type="submission" date="2006-12" db="EMBL/GenBank/DDBJ databases">
        <title>Complete sequence of chromosome of Mycobacterium sp. KMS.</title>
        <authorList>
            <consortium name="US DOE Joint Genome Institute"/>
            <person name="Copeland A."/>
            <person name="Lucas S."/>
            <person name="Lapidus A."/>
            <person name="Barry K."/>
            <person name="Detter J.C."/>
            <person name="Glavina del Rio T."/>
            <person name="Hammon N."/>
            <person name="Israni S."/>
            <person name="Dalin E."/>
            <person name="Tice H."/>
            <person name="Pitluck S."/>
            <person name="Kiss H."/>
            <person name="Brettin T."/>
            <person name="Bruce D."/>
            <person name="Han C."/>
            <person name="Tapia R."/>
            <person name="Gilna P."/>
            <person name="Schmutz J."/>
            <person name="Larimer F."/>
            <person name="Land M."/>
            <person name="Hauser L."/>
            <person name="Kyrpides N."/>
            <person name="Mikhailova N."/>
            <person name="Miller C.D."/>
            <person name="Richardson P."/>
        </authorList>
    </citation>
    <scope>NUCLEOTIDE SEQUENCE [LARGE SCALE GENOMIC DNA]</scope>
    <source>
        <strain>KMS</strain>
    </source>
</reference>
<feature type="chain" id="PRO_0000323889" description="Uridylate kinase">
    <location>
        <begin position="1"/>
        <end position="252"/>
    </location>
</feature>
<feature type="binding site" evidence="1">
    <location>
        <begin position="27"/>
        <end position="30"/>
    </location>
    <ligand>
        <name>ATP</name>
        <dbReference type="ChEBI" id="CHEBI:30616"/>
    </ligand>
</feature>
<feature type="binding site" evidence="1">
    <location>
        <position position="68"/>
    </location>
    <ligand>
        <name>UMP</name>
        <dbReference type="ChEBI" id="CHEBI:57865"/>
    </ligand>
</feature>
<feature type="binding site" evidence="1">
    <location>
        <position position="69"/>
    </location>
    <ligand>
        <name>ATP</name>
        <dbReference type="ChEBI" id="CHEBI:30616"/>
    </ligand>
</feature>
<feature type="binding site" evidence="1">
    <location>
        <position position="73"/>
    </location>
    <ligand>
        <name>ATP</name>
        <dbReference type="ChEBI" id="CHEBI:30616"/>
    </ligand>
</feature>
<feature type="binding site" evidence="1">
    <location>
        <position position="88"/>
    </location>
    <ligand>
        <name>UMP</name>
        <dbReference type="ChEBI" id="CHEBI:57865"/>
    </ligand>
</feature>
<feature type="binding site" evidence="1">
    <location>
        <begin position="149"/>
        <end position="156"/>
    </location>
    <ligand>
        <name>UMP</name>
        <dbReference type="ChEBI" id="CHEBI:57865"/>
    </ligand>
</feature>
<feature type="binding site" evidence="1">
    <location>
        <position position="182"/>
    </location>
    <ligand>
        <name>ATP</name>
        <dbReference type="ChEBI" id="CHEBI:30616"/>
    </ligand>
</feature>
<feature type="binding site" evidence="1">
    <location>
        <position position="185"/>
    </location>
    <ligand>
        <name>ATP</name>
        <dbReference type="ChEBI" id="CHEBI:30616"/>
    </ligand>
</feature>
<sequence length="252" mass="26712">MSEPNSDHGAGAAVGETRPLYSRVLLKLGGEMFGGGAVGLDPDVVHLVARQIAEVVRSGVQVAVVIGGGNFFRGAQLQQRGMERTRSDYMGMLGTVMNSLALQDFLEKEGIDTRVQTAITMGQVAEPYIPLRAVRHLEKGRVVIFGAGMGLPYFSTDTTAAQRALEIGAEVVLMAKAVDGVYTADPRKDPDAQLLTAITHREVIDRGLAVADATAFSLCMDNGMPILVFNLLVDGNIARAVAGEKIGTLVTT</sequence>
<accession>A1UEJ0</accession>
<keyword id="KW-0067">ATP-binding</keyword>
<keyword id="KW-0963">Cytoplasm</keyword>
<keyword id="KW-0418">Kinase</keyword>
<keyword id="KW-0547">Nucleotide-binding</keyword>
<keyword id="KW-0665">Pyrimidine biosynthesis</keyword>
<keyword id="KW-0808">Transferase</keyword>
<dbReference type="EC" id="2.7.4.22" evidence="1"/>
<dbReference type="EMBL" id="CP000518">
    <property type="protein sequence ID" value="ABL91248.1"/>
    <property type="status" value="ALT_INIT"/>
    <property type="molecule type" value="Genomic_DNA"/>
</dbReference>
<dbReference type="SMR" id="A1UEJ0"/>
<dbReference type="STRING" id="189918.Mkms_2049"/>
<dbReference type="KEGG" id="mkm:Mkms_2049"/>
<dbReference type="HOGENOM" id="CLU_033861_0_0_11"/>
<dbReference type="OrthoDB" id="9807458at2"/>
<dbReference type="UniPathway" id="UPA00159">
    <property type="reaction ID" value="UER00275"/>
</dbReference>
<dbReference type="GO" id="GO:0005737">
    <property type="term" value="C:cytoplasm"/>
    <property type="evidence" value="ECO:0007669"/>
    <property type="project" value="UniProtKB-SubCell"/>
</dbReference>
<dbReference type="GO" id="GO:0005524">
    <property type="term" value="F:ATP binding"/>
    <property type="evidence" value="ECO:0007669"/>
    <property type="project" value="UniProtKB-KW"/>
</dbReference>
<dbReference type="GO" id="GO:0033862">
    <property type="term" value="F:UMP kinase activity"/>
    <property type="evidence" value="ECO:0007669"/>
    <property type="project" value="UniProtKB-EC"/>
</dbReference>
<dbReference type="GO" id="GO:0044210">
    <property type="term" value="P:'de novo' CTP biosynthetic process"/>
    <property type="evidence" value="ECO:0007669"/>
    <property type="project" value="UniProtKB-UniRule"/>
</dbReference>
<dbReference type="GO" id="GO:0006225">
    <property type="term" value="P:UDP biosynthetic process"/>
    <property type="evidence" value="ECO:0007669"/>
    <property type="project" value="TreeGrafter"/>
</dbReference>
<dbReference type="CDD" id="cd04254">
    <property type="entry name" value="AAK_UMPK-PyrH-Ec"/>
    <property type="match status" value="1"/>
</dbReference>
<dbReference type="FunFam" id="3.40.1160.10:FF:000001">
    <property type="entry name" value="Uridylate kinase"/>
    <property type="match status" value="1"/>
</dbReference>
<dbReference type="Gene3D" id="3.40.1160.10">
    <property type="entry name" value="Acetylglutamate kinase-like"/>
    <property type="match status" value="1"/>
</dbReference>
<dbReference type="HAMAP" id="MF_01220_B">
    <property type="entry name" value="PyrH_B"/>
    <property type="match status" value="1"/>
</dbReference>
<dbReference type="InterPro" id="IPR036393">
    <property type="entry name" value="AceGlu_kinase-like_sf"/>
</dbReference>
<dbReference type="InterPro" id="IPR001048">
    <property type="entry name" value="Asp/Glu/Uridylate_kinase"/>
</dbReference>
<dbReference type="InterPro" id="IPR011817">
    <property type="entry name" value="Uridylate_kinase"/>
</dbReference>
<dbReference type="InterPro" id="IPR015963">
    <property type="entry name" value="Uridylate_kinase_bac"/>
</dbReference>
<dbReference type="NCBIfam" id="TIGR02075">
    <property type="entry name" value="pyrH_bact"/>
    <property type="match status" value="1"/>
</dbReference>
<dbReference type="PANTHER" id="PTHR42833">
    <property type="entry name" value="URIDYLATE KINASE"/>
    <property type="match status" value="1"/>
</dbReference>
<dbReference type="PANTHER" id="PTHR42833:SF4">
    <property type="entry name" value="URIDYLATE KINASE PUMPKIN, CHLOROPLASTIC"/>
    <property type="match status" value="1"/>
</dbReference>
<dbReference type="Pfam" id="PF00696">
    <property type="entry name" value="AA_kinase"/>
    <property type="match status" value="1"/>
</dbReference>
<dbReference type="PIRSF" id="PIRSF005650">
    <property type="entry name" value="Uridylate_kin"/>
    <property type="match status" value="1"/>
</dbReference>
<dbReference type="SUPFAM" id="SSF53633">
    <property type="entry name" value="Carbamate kinase-like"/>
    <property type="match status" value="1"/>
</dbReference>